<name>Y2204_ARCFU</name>
<dbReference type="EMBL" id="AE000782">
    <property type="protein sequence ID" value="AAB89048.1"/>
    <property type="molecule type" value="Genomic_DNA"/>
</dbReference>
<dbReference type="PIR" id="D69525">
    <property type="entry name" value="D69525"/>
</dbReference>
<dbReference type="RefSeq" id="WP_010879693.1">
    <property type="nucleotide sequence ID" value="NC_000917.1"/>
</dbReference>
<dbReference type="SMR" id="O28079"/>
<dbReference type="STRING" id="224325.AF_2204"/>
<dbReference type="PaxDb" id="224325-AF_2204"/>
<dbReference type="EnsemblBacteria" id="AAB89048">
    <property type="protein sequence ID" value="AAB89048"/>
    <property type="gene ID" value="AF_2204"/>
</dbReference>
<dbReference type="GeneID" id="1485433"/>
<dbReference type="KEGG" id="afu:AF_2204"/>
<dbReference type="eggNOG" id="arCOG00945">
    <property type="taxonomic scope" value="Archaea"/>
</dbReference>
<dbReference type="HOGENOM" id="CLU_009273_3_0_2"/>
<dbReference type="OrthoDB" id="5620at2157"/>
<dbReference type="PhylomeDB" id="O28079"/>
<dbReference type="Proteomes" id="UP000002199">
    <property type="component" value="Chromosome"/>
</dbReference>
<dbReference type="GO" id="GO:0051539">
    <property type="term" value="F:4 iron, 4 sulfur cluster binding"/>
    <property type="evidence" value="ECO:0007669"/>
    <property type="project" value="UniProtKB-KW"/>
</dbReference>
<dbReference type="GO" id="GO:0046872">
    <property type="term" value="F:metal ion binding"/>
    <property type="evidence" value="ECO:0007669"/>
    <property type="project" value="UniProtKB-KW"/>
</dbReference>
<dbReference type="GO" id="GO:0016491">
    <property type="term" value="F:oxidoreductase activity"/>
    <property type="evidence" value="ECO:0007669"/>
    <property type="project" value="InterPro"/>
</dbReference>
<dbReference type="CDD" id="cd01335">
    <property type="entry name" value="Radical_SAM"/>
    <property type="match status" value="1"/>
</dbReference>
<dbReference type="CDD" id="cd21124">
    <property type="entry name" value="SPASM_CteB-like"/>
    <property type="match status" value="1"/>
</dbReference>
<dbReference type="Gene3D" id="3.20.20.70">
    <property type="entry name" value="Aldolase class I"/>
    <property type="match status" value="1"/>
</dbReference>
<dbReference type="InterPro" id="IPR023885">
    <property type="entry name" value="4Fe4S-binding_SPASM_dom"/>
</dbReference>
<dbReference type="InterPro" id="IPR013785">
    <property type="entry name" value="Aldolase_TIM"/>
</dbReference>
<dbReference type="InterPro" id="IPR006638">
    <property type="entry name" value="Elp3/MiaA/NifB-like_rSAM"/>
</dbReference>
<dbReference type="InterPro" id="IPR007197">
    <property type="entry name" value="rSAM"/>
</dbReference>
<dbReference type="InterPro" id="IPR026423">
    <property type="entry name" value="rSAM_cobopep"/>
</dbReference>
<dbReference type="InterPro" id="IPR047602">
    <property type="entry name" value="SPASM_CteB-like"/>
</dbReference>
<dbReference type="InterPro" id="IPR023867">
    <property type="entry name" value="Sulphatase_maturase_rSAM"/>
</dbReference>
<dbReference type="NCBIfam" id="TIGR04163">
    <property type="entry name" value="rSAM_cobopep"/>
    <property type="match status" value="1"/>
</dbReference>
<dbReference type="NCBIfam" id="TIGR04085">
    <property type="entry name" value="rSAM_more_4Fe4S"/>
    <property type="match status" value="1"/>
</dbReference>
<dbReference type="PANTHER" id="PTHR43273">
    <property type="entry name" value="ANAEROBIC SULFATASE-MATURATING ENZYME HOMOLOG ASLB-RELATED"/>
    <property type="match status" value="1"/>
</dbReference>
<dbReference type="PANTHER" id="PTHR43273:SF3">
    <property type="entry name" value="ANAEROBIC SULFATASE-MATURATING ENZYME HOMOLOG ASLB-RELATED"/>
    <property type="match status" value="1"/>
</dbReference>
<dbReference type="Pfam" id="PF04055">
    <property type="entry name" value="Radical_SAM"/>
    <property type="match status" value="1"/>
</dbReference>
<dbReference type="SFLD" id="SFLDG01216">
    <property type="entry name" value="thioether_bond_formation_requi"/>
    <property type="match status" value="1"/>
</dbReference>
<dbReference type="SFLD" id="SFLDG01384">
    <property type="entry name" value="thioether_bond_formation_requi"/>
    <property type="match status" value="1"/>
</dbReference>
<dbReference type="SMART" id="SM00729">
    <property type="entry name" value="Elp3"/>
    <property type="match status" value="1"/>
</dbReference>
<dbReference type="SUPFAM" id="SSF102114">
    <property type="entry name" value="Radical SAM enzymes"/>
    <property type="match status" value="1"/>
</dbReference>
<dbReference type="PROSITE" id="PS51918">
    <property type="entry name" value="RADICAL_SAM"/>
    <property type="match status" value="1"/>
</dbReference>
<gene>
    <name type="ordered locus">AF_2204</name>
</gene>
<feature type="chain" id="PRO_0000134465" description="Uncharacterized protein AF_2204">
    <location>
        <begin position="1"/>
        <end position="412"/>
    </location>
</feature>
<feature type="domain" description="Radical SAM core" evidence="1">
    <location>
        <begin position="50"/>
        <end position="264"/>
    </location>
</feature>
<feature type="binding site" evidence="1">
    <location>
        <position position="64"/>
    </location>
    <ligand>
        <name>[4Fe-4S] cluster</name>
        <dbReference type="ChEBI" id="CHEBI:49883"/>
        <note>4Fe-4S-S-AdoMet</note>
    </ligand>
</feature>
<feature type="binding site" evidence="1">
    <location>
        <position position="68"/>
    </location>
    <ligand>
        <name>[4Fe-4S] cluster</name>
        <dbReference type="ChEBI" id="CHEBI:49883"/>
        <note>4Fe-4S-S-AdoMet</note>
    </ligand>
</feature>
<feature type="binding site" evidence="1">
    <location>
        <position position="71"/>
    </location>
    <ligand>
        <name>[4Fe-4S] cluster</name>
        <dbReference type="ChEBI" id="CHEBI:49883"/>
        <note>4Fe-4S-S-AdoMet</note>
    </ligand>
</feature>
<organism>
    <name type="scientific">Archaeoglobus fulgidus (strain ATCC 49558 / DSM 4304 / JCM 9628 / NBRC 100126 / VC-16)</name>
    <dbReference type="NCBI Taxonomy" id="224325"/>
    <lineage>
        <taxon>Archaea</taxon>
        <taxon>Methanobacteriati</taxon>
        <taxon>Methanobacteriota</taxon>
        <taxon>Archaeoglobi</taxon>
        <taxon>Archaeoglobales</taxon>
        <taxon>Archaeoglobaceae</taxon>
        <taxon>Archaeoglobus</taxon>
    </lineage>
</organism>
<reference key="1">
    <citation type="journal article" date="1997" name="Nature">
        <title>The complete genome sequence of the hyperthermophilic, sulphate-reducing archaeon Archaeoglobus fulgidus.</title>
        <authorList>
            <person name="Klenk H.-P."/>
            <person name="Clayton R.A."/>
            <person name="Tomb J.-F."/>
            <person name="White O."/>
            <person name="Nelson K.E."/>
            <person name="Ketchum K.A."/>
            <person name="Dodson R.J."/>
            <person name="Gwinn M.L."/>
            <person name="Hickey E.K."/>
            <person name="Peterson J.D."/>
            <person name="Richardson D.L."/>
            <person name="Kerlavage A.R."/>
            <person name="Graham D.E."/>
            <person name="Kyrpides N.C."/>
            <person name="Fleischmann R.D."/>
            <person name="Quackenbush J."/>
            <person name="Lee N.H."/>
            <person name="Sutton G.G."/>
            <person name="Gill S.R."/>
            <person name="Kirkness E.F."/>
            <person name="Dougherty B.A."/>
            <person name="McKenney K."/>
            <person name="Adams M.D."/>
            <person name="Loftus B.J."/>
            <person name="Peterson S.N."/>
            <person name="Reich C.I."/>
            <person name="McNeil L.K."/>
            <person name="Badger J.H."/>
            <person name="Glodek A."/>
            <person name="Zhou L."/>
            <person name="Overbeek R."/>
            <person name="Gocayne J.D."/>
            <person name="Weidman J.F."/>
            <person name="McDonald L.A."/>
            <person name="Utterback T.R."/>
            <person name="Cotton M.D."/>
            <person name="Spriggs T."/>
            <person name="Artiach P."/>
            <person name="Kaine B.P."/>
            <person name="Sykes S.M."/>
            <person name="Sadow P.W."/>
            <person name="D'Andrea K.P."/>
            <person name="Bowman C."/>
            <person name="Fujii C."/>
            <person name="Garland S.A."/>
            <person name="Mason T.M."/>
            <person name="Olsen G.J."/>
            <person name="Fraser C.M."/>
            <person name="Smith H.O."/>
            <person name="Woese C.R."/>
            <person name="Venter J.C."/>
        </authorList>
    </citation>
    <scope>NUCLEOTIDE SEQUENCE [LARGE SCALE GENOMIC DNA]</scope>
    <source>
        <strain>ATCC 49558 / DSM 4304 / JCM 9628 / NBRC 100126 / VC-16</strain>
    </source>
</reference>
<accession>O28079</accession>
<keyword id="KW-0004">4Fe-4S</keyword>
<keyword id="KW-0408">Iron</keyword>
<keyword id="KW-0411">Iron-sulfur</keyword>
<keyword id="KW-0479">Metal-binding</keyword>
<keyword id="KW-1185">Reference proteome</keyword>
<keyword id="KW-0949">S-adenosyl-L-methionine</keyword>
<protein>
    <recommendedName>
        <fullName>Uncharacterized protein AF_2204</fullName>
    </recommendedName>
</protein>
<proteinExistence type="inferred from homology"/>
<sequence length="412" mass="47257">MLKELEVNGKRFFLAPESNFWAIGEREEVERFYRERKDALLEEMQRYRFEVDIRTAYINPTESCNRNCPYCYIPAEIRERGTKMSYEKLEEILTVLAENGVERVIFHGAEPLMVKDEIFRAMEDFDFKYGIQTNATLLEEEDAELLMKKGASVGISLDSPYKETNDYLRGKGHYDAVMRALDFFDGYRSLNIIMTVNKHNFQHLPAMVDFLAGKVSVMLANPVRGTSPGGRELRPPEGFEDYYIKAIDRAIENTKSGRRIVIGDFANILLGLVAPTSRVLQCDISPCGGGRRFFAVSADGIYPCGEFIGMEEFRANLSALSDWSSLIEKFEVVRKRTVEQIEECRNCEFRNLCGAPCPAEIYAESGTMLRKSPYCEFYKKLALKAMDVIARGDVRNVLKLERMKAIYRVEDF</sequence>
<evidence type="ECO:0000255" key="1">
    <source>
        <dbReference type="PROSITE-ProRule" id="PRU01266"/>
    </source>
</evidence>
<evidence type="ECO:0000305" key="2"/>
<comment type="cofactor">
    <cofactor evidence="1">
        <name>[4Fe-4S] cluster</name>
        <dbReference type="ChEBI" id="CHEBI:49883"/>
    </cofactor>
</comment>
<comment type="similarity">
    <text evidence="2">Belongs to the radical SAM superfamily. Anaerobic sulfatase-maturating enzyme family.</text>
</comment>